<gene>
    <name type="primary">mrp</name>
    <name type="ordered locus">CPE2512</name>
</gene>
<comment type="function">
    <text evidence="1">Binds and transfers iron-sulfur (Fe-S) clusters to target apoproteins. Can hydrolyze ATP.</text>
</comment>
<comment type="subunit">
    <text evidence="1">Homodimer.</text>
</comment>
<comment type="similarity">
    <text evidence="1">Belongs to the Mrp/NBP35 ATP-binding proteins family.</text>
</comment>
<evidence type="ECO:0000255" key="1">
    <source>
        <dbReference type="HAMAP-Rule" id="MF_02040"/>
    </source>
</evidence>
<dbReference type="EMBL" id="BA000016">
    <property type="protein sequence ID" value="BAB82218.1"/>
    <property type="molecule type" value="Genomic_DNA"/>
</dbReference>
<dbReference type="EMBL" id="X86509">
    <property type="protein sequence ID" value="CAA60227.1"/>
    <property type="molecule type" value="Genomic_DNA"/>
</dbReference>
<dbReference type="RefSeq" id="WP_003450706.1">
    <property type="nucleotide sequence ID" value="NC_003366.1"/>
</dbReference>
<dbReference type="SMR" id="P53381"/>
<dbReference type="STRING" id="195102.gene:10491846"/>
<dbReference type="KEGG" id="cpe:CPE2512"/>
<dbReference type="HOGENOM" id="CLU_024839_0_2_9"/>
<dbReference type="Proteomes" id="UP000000818">
    <property type="component" value="Chromosome"/>
</dbReference>
<dbReference type="GO" id="GO:0051539">
    <property type="term" value="F:4 iron, 4 sulfur cluster binding"/>
    <property type="evidence" value="ECO:0007669"/>
    <property type="project" value="TreeGrafter"/>
</dbReference>
<dbReference type="GO" id="GO:0005524">
    <property type="term" value="F:ATP binding"/>
    <property type="evidence" value="ECO:0007669"/>
    <property type="project" value="UniProtKB-UniRule"/>
</dbReference>
<dbReference type="GO" id="GO:0016887">
    <property type="term" value="F:ATP hydrolysis activity"/>
    <property type="evidence" value="ECO:0007669"/>
    <property type="project" value="UniProtKB-UniRule"/>
</dbReference>
<dbReference type="GO" id="GO:0140663">
    <property type="term" value="F:ATP-dependent FeS chaperone activity"/>
    <property type="evidence" value="ECO:0007669"/>
    <property type="project" value="InterPro"/>
</dbReference>
<dbReference type="GO" id="GO:0046872">
    <property type="term" value="F:metal ion binding"/>
    <property type="evidence" value="ECO:0007669"/>
    <property type="project" value="UniProtKB-KW"/>
</dbReference>
<dbReference type="GO" id="GO:0016226">
    <property type="term" value="P:iron-sulfur cluster assembly"/>
    <property type="evidence" value="ECO:0007669"/>
    <property type="project" value="InterPro"/>
</dbReference>
<dbReference type="CDD" id="cd02037">
    <property type="entry name" value="Mrp_NBP35"/>
    <property type="match status" value="1"/>
</dbReference>
<dbReference type="FunFam" id="3.40.50.300:FF:001119">
    <property type="entry name" value="Iron-sulfur cluster carrier protein"/>
    <property type="match status" value="1"/>
</dbReference>
<dbReference type="Gene3D" id="3.40.50.300">
    <property type="entry name" value="P-loop containing nucleotide triphosphate hydrolases"/>
    <property type="match status" value="1"/>
</dbReference>
<dbReference type="HAMAP" id="MF_02040">
    <property type="entry name" value="Mrp_NBP35"/>
    <property type="match status" value="1"/>
</dbReference>
<dbReference type="InterPro" id="IPR000808">
    <property type="entry name" value="Mrp-like_CS"/>
</dbReference>
<dbReference type="InterPro" id="IPR019591">
    <property type="entry name" value="Mrp/NBP35_ATP-bd"/>
</dbReference>
<dbReference type="InterPro" id="IPR044304">
    <property type="entry name" value="NUBPL-like"/>
</dbReference>
<dbReference type="InterPro" id="IPR027417">
    <property type="entry name" value="P-loop_NTPase"/>
</dbReference>
<dbReference type="InterPro" id="IPR033756">
    <property type="entry name" value="YlxH/NBP35"/>
</dbReference>
<dbReference type="PANTHER" id="PTHR42961">
    <property type="entry name" value="IRON-SULFUR PROTEIN NUBPL"/>
    <property type="match status" value="1"/>
</dbReference>
<dbReference type="PANTHER" id="PTHR42961:SF2">
    <property type="entry name" value="IRON-SULFUR PROTEIN NUBPL"/>
    <property type="match status" value="1"/>
</dbReference>
<dbReference type="Pfam" id="PF10609">
    <property type="entry name" value="ParA"/>
    <property type="match status" value="1"/>
</dbReference>
<dbReference type="SUPFAM" id="SSF52540">
    <property type="entry name" value="P-loop containing nucleoside triphosphate hydrolases"/>
    <property type="match status" value="1"/>
</dbReference>
<dbReference type="PROSITE" id="PS01215">
    <property type="entry name" value="MRP"/>
    <property type="match status" value="1"/>
</dbReference>
<accession>P53381</accession>
<protein>
    <recommendedName>
        <fullName evidence="1">Iron-sulfur cluster carrier protein</fullName>
    </recommendedName>
</protein>
<feature type="chain" id="PRO_0000184930" description="Iron-sulfur cluster carrier protein">
    <location>
        <begin position="1"/>
        <end position="284"/>
    </location>
</feature>
<feature type="binding site" evidence="1">
    <location>
        <begin position="46"/>
        <end position="53"/>
    </location>
    <ligand>
        <name>ATP</name>
        <dbReference type="ChEBI" id="CHEBI:30616"/>
    </ligand>
</feature>
<name>APBC_CLOPE</name>
<reference key="1">
    <citation type="journal article" date="2002" name="Proc. Natl. Acad. Sci. U.S.A.">
        <title>Complete genome sequence of Clostridium perfringens, an anaerobic flesh-eater.</title>
        <authorList>
            <person name="Shimizu T."/>
            <person name="Ohtani K."/>
            <person name="Hirakawa H."/>
            <person name="Ohshima K."/>
            <person name="Yamashita A."/>
            <person name="Shiba T."/>
            <person name="Ogasawara N."/>
            <person name="Hattori M."/>
            <person name="Kuhara S."/>
            <person name="Hayashi H."/>
        </authorList>
    </citation>
    <scope>NUCLEOTIDE SEQUENCE [LARGE SCALE GENOMIC DNA]</scope>
    <source>
        <strain>13 / Type A</strain>
    </source>
</reference>
<reference key="2">
    <citation type="journal article" date="1995" name="J. Bacteriol.">
        <title>Rapid expansion of the physical and genetic map of the chromosome of Clostridium perfringens CPN50.</title>
        <authorList>
            <person name="Katayama S."/>
            <person name="Dupuy B."/>
            <person name="Garnier T."/>
            <person name="Cole S.T."/>
        </authorList>
    </citation>
    <scope>NUCLEOTIDE SEQUENCE [GENOMIC DNA] OF 50-189</scope>
    <source>
        <strain>CPN50</strain>
    </source>
</reference>
<sequence>MGSCASCANKDKCSSASKDGGCSSSVPAKLGTNYGNIKNVIGVISGKGGVGKSTVTGILATQLAKKGYKVGVLDADITGPSMPRFFGINEKRADIVAMDSEGKQVKFVPVKTELGIKVISMNLLMEVEDDPVIWRGPMVTGVLNQMFKDTDWEELDYLLIDMPPGTSDITLTVMQTFPIKELVIVSTPQDMVSMIVKKLVTMAHKMNVCVRGVVENMAYIECECGKKMRVFSKKSSEEHAEYLGLPLIGELPINLDLTEALENGKAEEYVAENPLYSLIFEGLY</sequence>
<keyword id="KW-0067">ATP-binding</keyword>
<keyword id="KW-0378">Hydrolase</keyword>
<keyword id="KW-0408">Iron</keyword>
<keyword id="KW-0411">Iron-sulfur</keyword>
<keyword id="KW-0479">Metal-binding</keyword>
<keyword id="KW-0547">Nucleotide-binding</keyword>
<keyword id="KW-1185">Reference proteome</keyword>
<organism>
    <name type="scientific">Clostridium perfringens (strain 13 / Type A)</name>
    <dbReference type="NCBI Taxonomy" id="195102"/>
    <lineage>
        <taxon>Bacteria</taxon>
        <taxon>Bacillati</taxon>
        <taxon>Bacillota</taxon>
        <taxon>Clostridia</taxon>
        <taxon>Eubacteriales</taxon>
        <taxon>Clostridiaceae</taxon>
        <taxon>Clostridium</taxon>
    </lineage>
</organism>
<proteinExistence type="inferred from homology"/>